<keyword id="KW-1005">Bacterial flagellum biogenesis</keyword>
<keyword id="KW-0963">Cytoplasm</keyword>
<keyword id="KW-0678">Repressor</keyword>
<keyword id="KW-0694">RNA-binding</keyword>
<keyword id="KW-0810">Translation regulation</keyword>
<dbReference type="EMBL" id="CP001358">
    <property type="protein sequence ID" value="ACL49895.1"/>
    <property type="molecule type" value="Genomic_DNA"/>
</dbReference>
<dbReference type="SMR" id="B8J2X6"/>
<dbReference type="STRING" id="525146.Ddes_1999"/>
<dbReference type="KEGG" id="dds:Ddes_1999"/>
<dbReference type="eggNOG" id="COG1551">
    <property type="taxonomic scope" value="Bacteria"/>
</dbReference>
<dbReference type="HOGENOM" id="CLU_164837_0_2_7"/>
<dbReference type="GO" id="GO:0005829">
    <property type="term" value="C:cytosol"/>
    <property type="evidence" value="ECO:0007669"/>
    <property type="project" value="TreeGrafter"/>
</dbReference>
<dbReference type="GO" id="GO:0048027">
    <property type="term" value="F:mRNA 5'-UTR binding"/>
    <property type="evidence" value="ECO:0007669"/>
    <property type="project" value="UniProtKB-UniRule"/>
</dbReference>
<dbReference type="GO" id="GO:0044781">
    <property type="term" value="P:bacterial-type flagellum organization"/>
    <property type="evidence" value="ECO:0007669"/>
    <property type="project" value="UniProtKB-KW"/>
</dbReference>
<dbReference type="GO" id="GO:0006402">
    <property type="term" value="P:mRNA catabolic process"/>
    <property type="evidence" value="ECO:0007669"/>
    <property type="project" value="InterPro"/>
</dbReference>
<dbReference type="GO" id="GO:0045947">
    <property type="term" value="P:negative regulation of translational initiation"/>
    <property type="evidence" value="ECO:0007669"/>
    <property type="project" value="UniProtKB-UniRule"/>
</dbReference>
<dbReference type="GO" id="GO:1902208">
    <property type="term" value="P:regulation of bacterial-type flagellum assembly"/>
    <property type="evidence" value="ECO:0007669"/>
    <property type="project" value="UniProtKB-UniRule"/>
</dbReference>
<dbReference type="GO" id="GO:0006109">
    <property type="term" value="P:regulation of carbohydrate metabolic process"/>
    <property type="evidence" value="ECO:0007669"/>
    <property type="project" value="InterPro"/>
</dbReference>
<dbReference type="Gene3D" id="2.60.40.4380">
    <property type="entry name" value="Translational regulator CsrA"/>
    <property type="match status" value="1"/>
</dbReference>
<dbReference type="HAMAP" id="MF_00167">
    <property type="entry name" value="CsrA"/>
    <property type="match status" value="1"/>
</dbReference>
<dbReference type="InterPro" id="IPR003751">
    <property type="entry name" value="CsrA"/>
</dbReference>
<dbReference type="InterPro" id="IPR036107">
    <property type="entry name" value="CsrA_sf"/>
</dbReference>
<dbReference type="NCBIfam" id="TIGR00202">
    <property type="entry name" value="csrA"/>
    <property type="match status" value="1"/>
</dbReference>
<dbReference type="NCBIfam" id="NF002469">
    <property type="entry name" value="PRK01712.1"/>
    <property type="match status" value="1"/>
</dbReference>
<dbReference type="PANTHER" id="PTHR34984">
    <property type="entry name" value="CARBON STORAGE REGULATOR"/>
    <property type="match status" value="1"/>
</dbReference>
<dbReference type="PANTHER" id="PTHR34984:SF1">
    <property type="entry name" value="CARBON STORAGE REGULATOR"/>
    <property type="match status" value="1"/>
</dbReference>
<dbReference type="Pfam" id="PF02599">
    <property type="entry name" value="CsrA"/>
    <property type="match status" value="1"/>
</dbReference>
<dbReference type="SUPFAM" id="SSF117130">
    <property type="entry name" value="CsrA-like"/>
    <property type="match status" value="1"/>
</dbReference>
<name>CSRA_DESDA</name>
<reference key="1">
    <citation type="submission" date="2009-01" db="EMBL/GenBank/DDBJ databases">
        <title>Complete sequence of Desulfovibrio desulfuricans subsp. desulfuricans str. ATCC 27774.</title>
        <authorList>
            <consortium name="US DOE Joint Genome Institute"/>
            <person name="Lucas S."/>
            <person name="Copeland A."/>
            <person name="Lapidus A."/>
            <person name="Glavina del Rio T."/>
            <person name="Tice H."/>
            <person name="Bruce D."/>
            <person name="Goodwin L."/>
            <person name="Pitluck S."/>
            <person name="Sims D."/>
            <person name="Lu M."/>
            <person name="Kiss H."/>
            <person name="Meineke L."/>
            <person name="Brettin T."/>
            <person name="Detter J.C."/>
            <person name="Han C."/>
            <person name="Larimer F."/>
            <person name="Land M."/>
            <person name="Hauser L."/>
            <person name="Kyrpides N."/>
            <person name="Ovchinnikova G."/>
            <person name="Hazen T.C."/>
        </authorList>
    </citation>
    <scope>NUCLEOTIDE SEQUENCE [LARGE SCALE GENOMIC DNA]</scope>
    <source>
        <strain>ATCC 27774 / DSM 6949 / MB</strain>
    </source>
</reference>
<gene>
    <name evidence="1" type="primary">csrA</name>
    <name type="ordered locus">Ddes_1999</name>
</gene>
<evidence type="ECO:0000255" key="1">
    <source>
        <dbReference type="HAMAP-Rule" id="MF_00167"/>
    </source>
</evidence>
<feature type="chain" id="PRO_1000123623" description="Translational regulator CsrA">
    <location>
        <begin position="1"/>
        <end position="78"/>
    </location>
</feature>
<proteinExistence type="inferred from homology"/>
<accession>B8J2X6</accession>
<protein>
    <recommendedName>
        <fullName evidence="1">Translational regulator CsrA</fullName>
    </recommendedName>
</protein>
<organism>
    <name type="scientific">Desulfovibrio desulfuricans (strain ATCC 27774 / DSM 6949 / MB)</name>
    <dbReference type="NCBI Taxonomy" id="525146"/>
    <lineage>
        <taxon>Bacteria</taxon>
        <taxon>Pseudomonadati</taxon>
        <taxon>Thermodesulfobacteriota</taxon>
        <taxon>Desulfovibrionia</taxon>
        <taxon>Desulfovibrionales</taxon>
        <taxon>Desulfovibrionaceae</taxon>
        <taxon>Desulfovibrio</taxon>
    </lineage>
</organism>
<comment type="function">
    <text evidence="1">A translational regulator that binds mRNA to regulate translation initiation and/or mRNA stability. Usually binds in the 5'-UTR at or near the Shine-Dalgarno sequence preventing ribosome-binding, thus repressing translation. Its main target seems to be the major flagellin gene, while its function is anatagonized by FliW.</text>
</comment>
<comment type="subunit">
    <text evidence="1">Homodimer; the beta-strands of each monomer intercalate to form a hydrophobic core, while the alpha-helices form wings that extend away from the core.</text>
</comment>
<comment type="subcellular location">
    <subcellularLocation>
        <location evidence="1">Cytoplasm</location>
    </subcellularLocation>
</comment>
<comment type="similarity">
    <text evidence="1">Belongs to the CsrA/RsmA family.</text>
</comment>
<sequence>MLILTRRPGESLYLGENIRITVLGMQGKQVKLGLEVPGDTTVYREEVYKRVVEENRRALETSNNDLMVAAELWHETKK</sequence>